<keyword id="KW-0134">Cell wall</keyword>
<keyword id="KW-0963">Cytoplasm</keyword>
<keyword id="KW-0324">Glycolysis</keyword>
<keyword id="KW-0456">Lyase</keyword>
<keyword id="KW-0460">Magnesium</keyword>
<keyword id="KW-0479">Metal-binding</keyword>
<keyword id="KW-1185">Reference proteome</keyword>
<keyword id="KW-0964">Secreted</keyword>
<feature type="chain" id="PRO_0000280879" description="Enolase">
    <location>
        <begin position="1"/>
        <end position="434"/>
    </location>
</feature>
<feature type="active site" description="Proton donor" evidence="1">
    <location>
        <position position="205"/>
    </location>
</feature>
<feature type="active site" description="Proton acceptor" evidence="1">
    <location>
        <position position="343"/>
    </location>
</feature>
<feature type="binding site" evidence="1">
    <location>
        <position position="163"/>
    </location>
    <ligand>
        <name>(2R)-2-phosphoglycerate</name>
        <dbReference type="ChEBI" id="CHEBI:58289"/>
    </ligand>
</feature>
<feature type="binding site" evidence="1">
    <location>
        <position position="242"/>
    </location>
    <ligand>
        <name>Mg(2+)</name>
        <dbReference type="ChEBI" id="CHEBI:18420"/>
    </ligand>
</feature>
<feature type="binding site" evidence="1">
    <location>
        <position position="291"/>
    </location>
    <ligand>
        <name>Mg(2+)</name>
        <dbReference type="ChEBI" id="CHEBI:18420"/>
    </ligand>
</feature>
<feature type="binding site" evidence="1">
    <location>
        <position position="318"/>
    </location>
    <ligand>
        <name>Mg(2+)</name>
        <dbReference type="ChEBI" id="CHEBI:18420"/>
    </ligand>
</feature>
<feature type="binding site" evidence="1">
    <location>
        <position position="343"/>
    </location>
    <ligand>
        <name>(2R)-2-phosphoglycerate</name>
        <dbReference type="ChEBI" id="CHEBI:58289"/>
    </ligand>
</feature>
<feature type="binding site" evidence="1">
    <location>
        <position position="372"/>
    </location>
    <ligand>
        <name>(2R)-2-phosphoglycerate</name>
        <dbReference type="ChEBI" id="CHEBI:58289"/>
    </ligand>
</feature>
<feature type="binding site" evidence="1">
    <location>
        <position position="373"/>
    </location>
    <ligand>
        <name>(2R)-2-phosphoglycerate</name>
        <dbReference type="ChEBI" id="CHEBI:58289"/>
    </ligand>
</feature>
<feature type="binding site" evidence="1">
    <location>
        <position position="394"/>
    </location>
    <ligand>
        <name>(2R)-2-phosphoglycerate</name>
        <dbReference type="ChEBI" id="CHEBI:58289"/>
    </ligand>
</feature>
<protein>
    <recommendedName>
        <fullName evidence="1">Enolase</fullName>
        <ecNumber evidence="1">4.2.1.11</ecNumber>
    </recommendedName>
    <alternativeName>
        <fullName evidence="1">2-phospho-D-glycerate hydro-lyase</fullName>
    </alternativeName>
    <alternativeName>
        <fullName evidence="1">2-phosphoglycerate dehydratase</fullName>
    </alternativeName>
</protein>
<evidence type="ECO:0000255" key="1">
    <source>
        <dbReference type="HAMAP-Rule" id="MF_00318"/>
    </source>
</evidence>
<evidence type="ECO:0000269" key="2">
    <source>
    </source>
</evidence>
<evidence type="ECO:0000305" key="3">
    <source>
    </source>
</evidence>
<organism>
    <name type="scientific">Streptococcus pneumoniae serotype 2 (strain D39 / NCTC 7466)</name>
    <dbReference type="NCBI Taxonomy" id="373153"/>
    <lineage>
        <taxon>Bacteria</taxon>
        <taxon>Bacillati</taxon>
        <taxon>Bacillota</taxon>
        <taxon>Bacilli</taxon>
        <taxon>Lactobacillales</taxon>
        <taxon>Streptococcaceae</taxon>
        <taxon>Streptococcus</taxon>
    </lineage>
</organism>
<dbReference type="EC" id="4.2.1.11" evidence="1"/>
<dbReference type="EMBL" id="CP000410">
    <property type="protein sequence ID" value="ABJ55064.1"/>
    <property type="molecule type" value="Genomic_DNA"/>
</dbReference>
<dbReference type="RefSeq" id="WP_000022815.1">
    <property type="nucleotide sequence ID" value="NZ_JAMLJR010000014.1"/>
</dbReference>
<dbReference type="SMR" id="Q04KG2"/>
<dbReference type="PaxDb" id="373153-SPD_1012"/>
<dbReference type="KEGG" id="spd:SPD_1012"/>
<dbReference type="eggNOG" id="COG0148">
    <property type="taxonomic scope" value="Bacteria"/>
</dbReference>
<dbReference type="HOGENOM" id="CLU_031223_2_1_9"/>
<dbReference type="BioCyc" id="SPNE373153:G1G6V-1100-MONOMER"/>
<dbReference type="UniPathway" id="UPA00109">
    <property type="reaction ID" value="UER00187"/>
</dbReference>
<dbReference type="Proteomes" id="UP000001452">
    <property type="component" value="Chromosome"/>
</dbReference>
<dbReference type="GO" id="GO:0009986">
    <property type="term" value="C:cell surface"/>
    <property type="evidence" value="ECO:0007669"/>
    <property type="project" value="UniProtKB-SubCell"/>
</dbReference>
<dbReference type="GO" id="GO:0005576">
    <property type="term" value="C:extracellular region"/>
    <property type="evidence" value="ECO:0007669"/>
    <property type="project" value="UniProtKB-SubCell"/>
</dbReference>
<dbReference type="GO" id="GO:0009274">
    <property type="term" value="C:peptidoglycan-based cell wall"/>
    <property type="evidence" value="ECO:0007669"/>
    <property type="project" value="UniProtKB-ARBA"/>
</dbReference>
<dbReference type="GO" id="GO:0000015">
    <property type="term" value="C:phosphopyruvate hydratase complex"/>
    <property type="evidence" value="ECO:0007669"/>
    <property type="project" value="InterPro"/>
</dbReference>
<dbReference type="GO" id="GO:0000287">
    <property type="term" value="F:magnesium ion binding"/>
    <property type="evidence" value="ECO:0007669"/>
    <property type="project" value="UniProtKB-UniRule"/>
</dbReference>
<dbReference type="GO" id="GO:0004634">
    <property type="term" value="F:phosphopyruvate hydratase activity"/>
    <property type="evidence" value="ECO:0007669"/>
    <property type="project" value="UniProtKB-UniRule"/>
</dbReference>
<dbReference type="GO" id="GO:0006096">
    <property type="term" value="P:glycolytic process"/>
    <property type="evidence" value="ECO:0007669"/>
    <property type="project" value="UniProtKB-UniRule"/>
</dbReference>
<dbReference type="CDD" id="cd03313">
    <property type="entry name" value="enolase"/>
    <property type="match status" value="1"/>
</dbReference>
<dbReference type="FunFam" id="3.20.20.120:FF:000001">
    <property type="entry name" value="Enolase"/>
    <property type="match status" value="1"/>
</dbReference>
<dbReference type="FunFam" id="3.30.390.10:FF:000001">
    <property type="entry name" value="Enolase"/>
    <property type="match status" value="1"/>
</dbReference>
<dbReference type="Gene3D" id="3.20.20.120">
    <property type="entry name" value="Enolase-like C-terminal domain"/>
    <property type="match status" value="1"/>
</dbReference>
<dbReference type="Gene3D" id="3.30.390.10">
    <property type="entry name" value="Enolase-like, N-terminal domain"/>
    <property type="match status" value="1"/>
</dbReference>
<dbReference type="HAMAP" id="MF_00318">
    <property type="entry name" value="Enolase"/>
    <property type="match status" value="1"/>
</dbReference>
<dbReference type="InterPro" id="IPR000941">
    <property type="entry name" value="Enolase"/>
</dbReference>
<dbReference type="InterPro" id="IPR036849">
    <property type="entry name" value="Enolase-like_C_sf"/>
</dbReference>
<dbReference type="InterPro" id="IPR029017">
    <property type="entry name" value="Enolase-like_N"/>
</dbReference>
<dbReference type="InterPro" id="IPR020810">
    <property type="entry name" value="Enolase_C"/>
</dbReference>
<dbReference type="InterPro" id="IPR020809">
    <property type="entry name" value="Enolase_CS"/>
</dbReference>
<dbReference type="InterPro" id="IPR020811">
    <property type="entry name" value="Enolase_N"/>
</dbReference>
<dbReference type="NCBIfam" id="TIGR01060">
    <property type="entry name" value="eno"/>
    <property type="match status" value="1"/>
</dbReference>
<dbReference type="PANTHER" id="PTHR11902">
    <property type="entry name" value="ENOLASE"/>
    <property type="match status" value="1"/>
</dbReference>
<dbReference type="PANTHER" id="PTHR11902:SF1">
    <property type="entry name" value="ENOLASE"/>
    <property type="match status" value="1"/>
</dbReference>
<dbReference type="Pfam" id="PF00113">
    <property type="entry name" value="Enolase_C"/>
    <property type="match status" value="1"/>
</dbReference>
<dbReference type="Pfam" id="PF03952">
    <property type="entry name" value="Enolase_N"/>
    <property type="match status" value="1"/>
</dbReference>
<dbReference type="PIRSF" id="PIRSF001400">
    <property type="entry name" value="Enolase"/>
    <property type="match status" value="1"/>
</dbReference>
<dbReference type="PRINTS" id="PR00148">
    <property type="entry name" value="ENOLASE"/>
</dbReference>
<dbReference type="SFLD" id="SFLDF00002">
    <property type="entry name" value="enolase"/>
    <property type="match status" value="1"/>
</dbReference>
<dbReference type="SFLD" id="SFLDG00178">
    <property type="entry name" value="enolase"/>
    <property type="match status" value="1"/>
</dbReference>
<dbReference type="SMART" id="SM01192">
    <property type="entry name" value="Enolase_C"/>
    <property type="match status" value="1"/>
</dbReference>
<dbReference type="SMART" id="SM01193">
    <property type="entry name" value="Enolase_N"/>
    <property type="match status" value="1"/>
</dbReference>
<dbReference type="SUPFAM" id="SSF51604">
    <property type="entry name" value="Enolase C-terminal domain-like"/>
    <property type="match status" value="1"/>
</dbReference>
<dbReference type="SUPFAM" id="SSF54826">
    <property type="entry name" value="Enolase N-terminal domain-like"/>
    <property type="match status" value="1"/>
</dbReference>
<dbReference type="PROSITE" id="PS00164">
    <property type="entry name" value="ENOLASE"/>
    <property type="match status" value="1"/>
</dbReference>
<comment type="function">
    <text evidence="1">Catalyzes the reversible conversion of 2-phosphoglycerate (2-PG) into phosphoenolpyruvate (PEP). It is essential for the degradation of carbohydrates via glycolysis.</text>
</comment>
<comment type="catalytic activity">
    <reaction evidence="1">
        <text>(2R)-2-phosphoglycerate = phosphoenolpyruvate + H2O</text>
        <dbReference type="Rhea" id="RHEA:10164"/>
        <dbReference type="ChEBI" id="CHEBI:15377"/>
        <dbReference type="ChEBI" id="CHEBI:58289"/>
        <dbReference type="ChEBI" id="CHEBI:58702"/>
        <dbReference type="EC" id="4.2.1.11"/>
    </reaction>
</comment>
<comment type="cofactor">
    <cofactor evidence="1">
        <name>Mg(2+)</name>
        <dbReference type="ChEBI" id="CHEBI:18420"/>
    </cofactor>
    <text evidence="1">Binds a second Mg(2+) ion via substrate during catalysis.</text>
</comment>
<comment type="pathway">
    <text evidence="1">Carbohydrate degradation; glycolysis; pyruvate from D-glyceraldehyde 3-phosphate: step 4/5.</text>
</comment>
<comment type="subcellular location">
    <subcellularLocation>
        <location evidence="1">Cytoplasm</location>
    </subcellularLocation>
    <subcellularLocation>
        <location evidence="1">Secreted</location>
    </subcellularLocation>
    <subcellularLocation>
        <location evidence="1 3">Cell surface</location>
    </subcellularLocation>
    <subcellularLocation>
        <location evidence="2">Secreted</location>
        <location evidence="2">Cell wall</location>
    </subcellularLocation>
    <text evidence="1 3">Fractions of enolase are present in both the cytoplasm and on the cell surface (Probable) (PubMed:9603964).</text>
</comment>
<comment type="similarity">
    <text evidence="1">Belongs to the enolase family.</text>
</comment>
<gene>
    <name evidence="1" type="primary">eno</name>
    <name type="ordered locus">SPD_1012</name>
</gene>
<name>ENO_STRP2</name>
<proteinExistence type="inferred from homology"/>
<sequence length="434" mass="47103">MSIITDVYAREVLDSRGNPTLEVEVYTESGAFGRGMVPSGASTGEHEAVELRDGDKSRYGGLGTQKAVDNVNNIIAEAIIGYDVRDQQAIDRAMIALDGTPNKGKLGANAILGVSIAVARAAADYLEIPLYSYLGGFNTKVLPTPMMNIINGGSHSDAPIAFQEFMILPVGAPTFKEALRYGAEIFHALKKILKSRGLETAVGDEGGFAPRFEGTEDGVETILAAIEAAGYVPGKDVFLGFDCASSEFYDKERKVYDYTKFEGEGAAVRTSAEQIDYLEELVNKYPIITIEDGMDENDWDGWKALTERLGKKVQLVGDDFFVTNTDYLARGIQEGAANSILIKVNQIGTLTETFEAIEMAKEAGYTAVVSHRSGETEDSTIADIAVATNAGQIKTGSLSRTDRIAKYNQLLRIEDQLGEVAEYRGLKSFYNLKK</sequence>
<accession>Q04KG2</accession>
<reference key="1">
    <citation type="journal article" date="2007" name="J. Bacteriol.">
        <title>Genome sequence of Avery's virulent serotype 2 strain D39 of Streptococcus pneumoniae and comparison with that of unencapsulated laboratory strain R6.</title>
        <authorList>
            <person name="Lanie J.A."/>
            <person name="Ng W.-L."/>
            <person name="Kazmierczak K.M."/>
            <person name="Andrzejewski T.M."/>
            <person name="Davidsen T.M."/>
            <person name="Wayne K.J."/>
            <person name="Tettelin H."/>
            <person name="Glass J.I."/>
            <person name="Winkler M.E."/>
        </authorList>
    </citation>
    <scope>NUCLEOTIDE SEQUENCE [LARGE SCALE GENOMIC DNA]</scope>
    <source>
        <strain>D39 / NCTC 7466</strain>
    </source>
</reference>
<reference key="2">
    <citation type="journal article" date="1998" name="J. Biol. Chem.">
        <title>Alpha-enolase, a novel strong plasmin(ogen) binding protein on the surface of pathogenic streptococci.</title>
        <authorList>
            <person name="Pancholi V."/>
            <person name="Fischetti V.A."/>
        </authorList>
    </citation>
    <scope>SUBCELLULAR LOCATION</scope>
    <source>
        <strain>D626 / Serotype M2</strain>
    </source>
</reference>